<keyword id="KW-0130">Cell adhesion</keyword>
<keyword id="KW-0965">Cell junction</keyword>
<keyword id="KW-1003">Cell membrane</keyword>
<keyword id="KW-0325">Glycoprotein</keyword>
<keyword id="KW-0472">Membrane</keyword>
<keyword id="KW-0654">Proteoglycan</keyword>
<keyword id="KW-1185">Reference proteome</keyword>
<keyword id="KW-0964">Secreted</keyword>
<keyword id="KW-0732">Signal</keyword>
<keyword id="KW-0812">Transmembrane</keyword>
<keyword id="KW-1133">Transmembrane helix</keyword>
<name>C99L2_PONAB</name>
<evidence type="ECO:0000250" key="1"/>
<evidence type="ECO:0000250" key="2">
    <source>
        <dbReference type="UniProtKB" id="Q8TCZ2"/>
    </source>
</evidence>
<evidence type="ECO:0000255" key="3"/>
<evidence type="ECO:0000256" key="4">
    <source>
        <dbReference type="SAM" id="MobiDB-lite"/>
    </source>
</evidence>
<evidence type="ECO:0000305" key="5"/>
<comment type="function">
    <text evidence="1">Plays a role in a late step of leukocyte extravasation helping cells to overcome the endothelial basement membrane. Acts at the same site as, but independently of, PECAM1 (By similarity). Homophilic adhesion molecule, but these interactions may not be required for cell aggregation (By similarity).</text>
</comment>
<comment type="subcellular location">
    <subcellularLocation>
        <location evidence="1">Cell membrane</location>
        <topology evidence="1">Single-pass type I membrane protein</topology>
        <orientation evidence="1">Extracellular side</orientation>
    </subcellularLocation>
    <subcellularLocation>
        <location evidence="1">Cell junction</location>
    </subcellularLocation>
    <subcellularLocation>
        <location evidence="2">Secreted</location>
    </subcellularLocation>
</comment>
<comment type="PTM">
    <text evidence="2">O-glycosylated.</text>
</comment>
<comment type="similarity">
    <text evidence="5">Belongs to the CD99 family.</text>
</comment>
<dbReference type="EMBL" id="CR857703">
    <property type="protein sequence ID" value="CAH89972.1"/>
    <property type="molecule type" value="mRNA"/>
</dbReference>
<dbReference type="RefSeq" id="NP_001124928.1">
    <property type="nucleotide sequence ID" value="NM_001131456.1"/>
</dbReference>
<dbReference type="Ensembl" id="ENSPPYT00000053080.1">
    <property type="protein sequence ID" value="ENSPPYP00000034441.1"/>
    <property type="gene ID" value="ENSPPYG00000020817.3"/>
</dbReference>
<dbReference type="GeneID" id="100171799"/>
<dbReference type="KEGG" id="pon:100171799"/>
<dbReference type="CTD" id="83692"/>
<dbReference type="GeneTree" id="ENSGT00940000154344"/>
<dbReference type="InParanoid" id="Q5RE35"/>
<dbReference type="OrthoDB" id="8961553at2759"/>
<dbReference type="Proteomes" id="UP000001595">
    <property type="component" value="Chromosome X"/>
</dbReference>
<dbReference type="GO" id="GO:0070161">
    <property type="term" value="C:anchoring junction"/>
    <property type="evidence" value="ECO:0007669"/>
    <property type="project" value="UniProtKB-SubCell"/>
</dbReference>
<dbReference type="GO" id="GO:0005576">
    <property type="term" value="C:extracellular region"/>
    <property type="evidence" value="ECO:0007669"/>
    <property type="project" value="UniProtKB-SubCell"/>
</dbReference>
<dbReference type="GO" id="GO:0005886">
    <property type="term" value="C:plasma membrane"/>
    <property type="evidence" value="ECO:0007669"/>
    <property type="project" value="UniProtKB-SubCell"/>
</dbReference>
<dbReference type="GO" id="GO:0007155">
    <property type="term" value="P:cell adhesion"/>
    <property type="evidence" value="ECO:0007669"/>
    <property type="project" value="UniProtKB-KW"/>
</dbReference>
<dbReference type="InterPro" id="IPR022078">
    <property type="entry name" value="CD99L2"/>
</dbReference>
<dbReference type="PANTHER" id="PTHR15076:SF12">
    <property type="entry name" value="CD99 ANTIGEN-LIKE PROTEIN 2"/>
    <property type="match status" value="1"/>
</dbReference>
<dbReference type="PANTHER" id="PTHR15076">
    <property type="entry name" value="CD99/MIC2 PROTEIN RELATED"/>
    <property type="match status" value="1"/>
</dbReference>
<dbReference type="Pfam" id="PF12301">
    <property type="entry name" value="CD99L2"/>
    <property type="match status" value="1"/>
</dbReference>
<reference key="1">
    <citation type="submission" date="2004-11" db="EMBL/GenBank/DDBJ databases">
        <authorList>
            <consortium name="The German cDNA consortium"/>
        </authorList>
    </citation>
    <scope>NUCLEOTIDE SEQUENCE [LARGE SCALE MRNA]</scope>
    <source>
        <tissue>Brain cortex</tissue>
    </source>
</reference>
<protein>
    <recommendedName>
        <fullName>CD99 antigen-like protein 2</fullName>
    </recommendedName>
    <cdAntigenName>CD99</cdAntigenName>
</protein>
<organism>
    <name type="scientific">Pongo abelii</name>
    <name type="common">Sumatran orangutan</name>
    <name type="synonym">Pongo pygmaeus abelii</name>
    <dbReference type="NCBI Taxonomy" id="9601"/>
    <lineage>
        <taxon>Eukaryota</taxon>
        <taxon>Metazoa</taxon>
        <taxon>Chordata</taxon>
        <taxon>Craniata</taxon>
        <taxon>Vertebrata</taxon>
        <taxon>Euteleostomi</taxon>
        <taxon>Mammalia</taxon>
        <taxon>Eutheria</taxon>
        <taxon>Euarchontoglires</taxon>
        <taxon>Primates</taxon>
        <taxon>Haplorrhini</taxon>
        <taxon>Catarrhini</taxon>
        <taxon>Hominidae</taxon>
        <taxon>Pongo</taxon>
    </lineage>
</organism>
<accession>Q5RE35</accession>
<sequence length="218" mass="23294">MVAWRSAFLVCLAFSLATLVQRGSGDFDDFNLKDAVKETSSVKQRWNHVTTTTKRPVTTRAPANTLGNDFDLADALDDRNDRDDGRRKPIAGGGGFSDKDLEDIVGGGEYKPDKGKGDGRYGSNDDPGSGMVAETGTIAGVASALAMALIGAVSSYISYQQKKFCFSIQHAAEGQEGLNADYVKGENLEAVVCEEPQVKYSALHTQSAEPPPSEPARI</sequence>
<proteinExistence type="evidence at transcript level"/>
<feature type="signal peptide" evidence="3">
    <location>
        <begin position="1"/>
        <end position="25"/>
    </location>
</feature>
<feature type="chain" id="PRO_0000340094" description="CD99 antigen-like protein 2">
    <location>
        <begin position="26"/>
        <end position="218"/>
    </location>
</feature>
<feature type="topological domain" description="Extracellular" evidence="3">
    <location>
        <begin position="26"/>
        <end position="136"/>
    </location>
</feature>
<feature type="transmembrane region" description="Helical" evidence="3">
    <location>
        <begin position="137"/>
        <end position="157"/>
    </location>
</feature>
<feature type="topological domain" description="Cytoplasmic" evidence="3">
    <location>
        <begin position="158"/>
        <end position="218"/>
    </location>
</feature>
<feature type="region of interest" description="Disordered" evidence="4">
    <location>
        <begin position="72"/>
        <end position="128"/>
    </location>
</feature>
<feature type="compositionally biased region" description="Basic and acidic residues" evidence="4">
    <location>
        <begin position="76"/>
        <end position="87"/>
    </location>
</feature>
<feature type="compositionally biased region" description="Basic and acidic residues" evidence="4">
    <location>
        <begin position="110"/>
        <end position="119"/>
    </location>
</feature>
<feature type="glycosylation site" description="O-linked (Xyl...) (chondroitin sulfate) serine" evidence="2">
    <location>
        <position position="129"/>
    </location>
</feature>
<gene>
    <name type="primary">CD99L2</name>
</gene>